<keyword id="KW-0963">Cytoplasm</keyword>
<keyword id="KW-0378">Hydrolase</keyword>
<keyword id="KW-0694">RNA-binding</keyword>
<keyword id="KW-0820">tRNA-binding</keyword>
<dbReference type="EC" id="3.1.1.96" evidence="1"/>
<dbReference type="EMBL" id="CU459141">
    <property type="protein sequence ID" value="CAM85088.1"/>
    <property type="molecule type" value="Genomic_DNA"/>
</dbReference>
<dbReference type="RefSeq" id="WP_001202027.1">
    <property type="nucleotide sequence ID" value="NZ_JBDGFB010000004.1"/>
</dbReference>
<dbReference type="SMR" id="B0V9V8"/>
<dbReference type="EnsemblBacteria" id="CAM85088">
    <property type="protein sequence ID" value="CAM85088"/>
    <property type="gene ID" value="ABAYE0101"/>
</dbReference>
<dbReference type="KEGG" id="aby:ABAYE0101"/>
<dbReference type="HOGENOM" id="CLU_076901_1_1_6"/>
<dbReference type="GO" id="GO:0005737">
    <property type="term" value="C:cytoplasm"/>
    <property type="evidence" value="ECO:0007669"/>
    <property type="project" value="UniProtKB-SubCell"/>
</dbReference>
<dbReference type="GO" id="GO:0051500">
    <property type="term" value="F:D-tyrosyl-tRNA(Tyr) deacylase activity"/>
    <property type="evidence" value="ECO:0007669"/>
    <property type="project" value="TreeGrafter"/>
</dbReference>
<dbReference type="GO" id="GO:0106026">
    <property type="term" value="F:Gly-tRNA(Ala) deacylase activity"/>
    <property type="evidence" value="ECO:0007669"/>
    <property type="project" value="UniProtKB-UniRule"/>
</dbReference>
<dbReference type="GO" id="GO:0043908">
    <property type="term" value="F:Ser(Gly)-tRNA(Ala) hydrolase activity"/>
    <property type="evidence" value="ECO:0007669"/>
    <property type="project" value="UniProtKB-UniRule"/>
</dbReference>
<dbReference type="GO" id="GO:0000049">
    <property type="term" value="F:tRNA binding"/>
    <property type="evidence" value="ECO:0007669"/>
    <property type="project" value="UniProtKB-UniRule"/>
</dbReference>
<dbReference type="GO" id="GO:0019478">
    <property type="term" value="P:D-amino acid catabolic process"/>
    <property type="evidence" value="ECO:0007669"/>
    <property type="project" value="UniProtKB-UniRule"/>
</dbReference>
<dbReference type="CDD" id="cd00563">
    <property type="entry name" value="Dtyr_deacylase"/>
    <property type="match status" value="1"/>
</dbReference>
<dbReference type="FunFam" id="3.50.80.10:FF:000001">
    <property type="entry name" value="D-aminoacyl-tRNA deacylase"/>
    <property type="match status" value="1"/>
</dbReference>
<dbReference type="Gene3D" id="3.50.80.10">
    <property type="entry name" value="D-tyrosyl-tRNA(Tyr) deacylase"/>
    <property type="match status" value="1"/>
</dbReference>
<dbReference type="HAMAP" id="MF_00518">
    <property type="entry name" value="Deacylase_Dtd"/>
    <property type="match status" value="1"/>
</dbReference>
<dbReference type="InterPro" id="IPR003732">
    <property type="entry name" value="Daa-tRNA_deacyls_DTD"/>
</dbReference>
<dbReference type="InterPro" id="IPR023509">
    <property type="entry name" value="DTD-like_sf"/>
</dbReference>
<dbReference type="NCBIfam" id="TIGR00256">
    <property type="entry name" value="D-aminoacyl-tRNA deacylase"/>
    <property type="match status" value="1"/>
</dbReference>
<dbReference type="PANTHER" id="PTHR10472:SF5">
    <property type="entry name" value="D-AMINOACYL-TRNA DEACYLASE 1"/>
    <property type="match status" value="1"/>
</dbReference>
<dbReference type="PANTHER" id="PTHR10472">
    <property type="entry name" value="D-TYROSYL-TRNA TYR DEACYLASE"/>
    <property type="match status" value="1"/>
</dbReference>
<dbReference type="Pfam" id="PF02580">
    <property type="entry name" value="Tyr_Deacylase"/>
    <property type="match status" value="1"/>
</dbReference>
<dbReference type="SUPFAM" id="SSF69500">
    <property type="entry name" value="DTD-like"/>
    <property type="match status" value="1"/>
</dbReference>
<sequence length="147" mass="16253">MRALIQRVLEAKVVVDGETTGEIQHGLLVFLGIGREDTLATGQKLIDKILKYRIFDDEQGKMGWNVSQANGGILLVSQFTLMAQTQKGLRPDFGPAMPPSDAKALYEQLVEYTRSQFENVQTGVFAADMKVHLINDGPVTFNLEVEA</sequence>
<reference key="1">
    <citation type="journal article" date="2008" name="PLoS ONE">
        <title>Comparative analysis of Acinetobacters: three genomes for three lifestyles.</title>
        <authorList>
            <person name="Vallenet D."/>
            <person name="Nordmann P."/>
            <person name="Barbe V."/>
            <person name="Poirel L."/>
            <person name="Mangenot S."/>
            <person name="Bataille E."/>
            <person name="Dossat C."/>
            <person name="Gas S."/>
            <person name="Kreimeyer A."/>
            <person name="Lenoble P."/>
            <person name="Oztas S."/>
            <person name="Poulain J."/>
            <person name="Segurens B."/>
            <person name="Robert C."/>
            <person name="Abergel C."/>
            <person name="Claverie J.-M."/>
            <person name="Raoult D."/>
            <person name="Medigue C."/>
            <person name="Weissenbach J."/>
            <person name="Cruveiller S."/>
        </authorList>
    </citation>
    <scope>NUCLEOTIDE SEQUENCE [LARGE SCALE GENOMIC DNA]</scope>
    <source>
        <strain>AYE</strain>
    </source>
</reference>
<feature type="chain" id="PRO_1000127483" description="D-aminoacyl-tRNA deacylase">
    <location>
        <begin position="1"/>
        <end position="147"/>
    </location>
</feature>
<feature type="short sequence motif" description="Gly-cisPro motif, important for rejection of L-amino acids" evidence="1">
    <location>
        <begin position="137"/>
        <end position="138"/>
    </location>
</feature>
<accession>B0V9V8</accession>
<evidence type="ECO:0000255" key="1">
    <source>
        <dbReference type="HAMAP-Rule" id="MF_00518"/>
    </source>
</evidence>
<protein>
    <recommendedName>
        <fullName evidence="1">D-aminoacyl-tRNA deacylase</fullName>
        <shortName evidence="1">DTD</shortName>
        <ecNumber evidence="1">3.1.1.96</ecNumber>
    </recommendedName>
    <alternativeName>
        <fullName evidence="1">Gly-tRNA(Ala) deacylase</fullName>
    </alternativeName>
</protein>
<comment type="function">
    <text evidence="1">An aminoacyl-tRNA editing enzyme that deacylates mischarged D-aminoacyl-tRNAs. Also deacylates mischarged glycyl-tRNA(Ala), protecting cells against glycine mischarging by AlaRS. Acts via tRNA-based rather than protein-based catalysis; rejects L-amino acids rather than detecting D-amino acids in the active site. By recycling D-aminoacyl-tRNA to D-amino acids and free tRNA molecules, this enzyme counteracts the toxicity associated with the formation of D-aminoacyl-tRNA entities in vivo and helps enforce protein L-homochirality.</text>
</comment>
<comment type="catalytic activity">
    <reaction evidence="1">
        <text>glycyl-tRNA(Ala) + H2O = tRNA(Ala) + glycine + H(+)</text>
        <dbReference type="Rhea" id="RHEA:53744"/>
        <dbReference type="Rhea" id="RHEA-COMP:9657"/>
        <dbReference type="Rhea" id="RHEA-COMP:13640"/>
        <dbReference type="ChEBI" id="CHEBI:15377"/>
        <dbReference type="ChEBI" id="CHEBI:15378"/>
        <dbReference type="ChEBI" id="CHEBI:57305"/>
        <dbReference type="ChEBI" id="CHEBI:78442"/>
        <dbReference type="ChEBI" id="CHEBI:78522"/>
        <dbReference type="EC" id="3.1.1.96"/>
    </reaction>
</comment>
<comment type="catalytic activity">
    <reaction evidence="1">
        <text>a D-aminoacyl-tRNA + H2O = a tRNA + a D-alpha-amino acid + H(+)</text>
        <dbReference type="Rhea" id="RHEA:13953"/>
        <dbReference type="Rhea" id="RHEA-COMP:10123"/>
        <dbReference type="Rhea" id="RHEA-COMP:10124"/>
        <dbReference type="ChEBI" id="CHEBI:15377"/>
        <dbReference type="ChEBI" id="CHEBI:15378"/>
        <dbReference type="ChEBI" id="CHEBI:59871"/>
        <dbReference type="ChEBI" id="CHEBI:78442"/>
        <dbReference type="ChEBI" id="CHEBI:79333"/>
        <dbReference type="EC" id="3.1.1.96"/>
    </reaction>
</comment>
<comment type="subunit">
    <text evidence="1">Homodimer.</text>
</comment>
<comment type="subcellular location">
    <subcellularLocation>
        <location evidence="1">Cytoplasm</location>
    </subcellularLocation>
</comment>
<comment type="domain">
    <text evidence="1">A Gly-cisPro motif from one monomer fits into the active site of the other monomer to allow specific chiral rejection of L-amino acids.</text>
</comment>
<comment type="similarity">
    <text evidence="1">Belongs to the DTD family.</text>
</comment>
<gene>
    <name evidence="1" type="primary">dtd</name>
    <name type="ordered locus">ABAYE0101</name>
</gene>
<proteinExistence type="inferred from homology"/>
<name>DTD_ACIBY</name>
<organism>
    <name type="scientific">Acinetobacter baumannii (strain AYE)</name>
    <dbReference type="NCBI Taxonomy" id="509173"/>
    <lineage>
        <taxon>Bacteria</taxon>
        <taxon>Pseudomonadati</taxon>
        <taxon>Pseudomonadota</taxon>
        <taxon>Gammaproteobacteria</taxon>
        <taxon>Moraxellales</taxon>
        <taxon>Moraxellaceae</taxon>
        <taxon>Acinetobacter</taxon>
        <taxon>Acinetobacter calcoaceticus/baumannii complex</taxon>
    </lineage>
</organism>